<feature type="signal peptide" evidence="2">
    <location>
        <begin position="1"/>
        <end position="18"/>
    </location>
</feature>
<feature type="propeptide" id="PRO_0000296308" evidence="1">
    <location>
        <begin position="19"/>
        <end position="24"/>
    </location>
</feature>
<feature type="chain" id="PRO_5000061221" description="Snake venom serine protease KN10">
    <location>
        <begin position="25"/>
        <end position="257"/>
    </location>
</feature>
<feature type="domain" description="Peptidase S1" evidence="3">
    <location>
        <begin position="25"/>
        <end position="248"/>
    </location>
</feature>
<feature type="active site" description="Charge relay system" evidence="1">
    <location>
        <position position="64"/>
    </location>
</feature>
<feature type="active site" description="Charge relay system" evidence="1">
    <location>
        <position position="109"/>
    </location>
</feature>
<feature type="active site" description="Charge relay system" evidence="1">
    <location>
        <position position="203"/>
    </location>
</feature>
<feature type="glycosylation site" description="N-linked (GlcNAc...) asparagine" evidence="2">
    <location>
        <position position="102"/>
    </location>
</feature>
<feature type="glycosylation site" description="N-linked (GlcNAc...) asparagine" evidence="2">
    <location>
        <position position="120"/>
    </location>
</feature>
<feature type="glycosylation site" description="N-linked (GlcNAc...) asparagine" evidence="2">
    <location>
        <position position="121"/>
    </location>
</feature>
<feature type="disulfide bond" evidence="3">
    <location>
        <begin position="31"/>
        <end position="162"/>
    </location>
</feature>
<feature type="disulfide bond" evidence="3">
    <location>
        <begin position="49"/>
        <end position="65"/>
    </location>
</feature>
<feature type="disulfide bond" evidence="3">
    <location>
        <begin position="141"/>
        <end position="209"/>
    </location>
</feature>
<feature type="disulfide bond" evidence="3">
    <location>
        <begin position="173"/>
        <end position="188"/>
    </location>
</feature>
<feature type="disulfide bond" evidence="3">
    <location>
        <begin position="199"/>
        <end position="224"/>
    </location>
</feature>
<protein>
    <recommendedName>
        <fullName>Snake venom serine protease KN10</fullName>
        <shortName>SVSP</shortName>
        <ecNumber>3.4.21.-</ecNumber>
    </recommendedName>
</protein>
<keyword id="KW-1015">Disulfide bond</keyword>
<keyword id="KW-0325">Glycoprotein</keyword>
<keyword id="KW-1199">Hemostasis impairing toxin</keyword>
<keyword id="KW-0378">Hydrolase</keyword>
<keyword id="KW-0645">Protease</keyword>
<keyword id="KW-0964">Secreted</keyword>
<keyword id="KW-0720">Serine protease</keyword>
<keyword id="KW-0732">Signal</keyword>
<keyword id="KW-0800">Toxin</keyword>
<keyword id="KW-0865">Zymogen</keyword>
<dbReference type="EC" id="3.4.21.-"/>
<dbReference type="EMBL" id="AF395769">
    <property type="protein sequence ID" value="AAQ02899.1"/>
    <property type="molecule type" value="mRNA"/>
</dbReference>
<dbReference type="SMR" id="Q71QI8"/>
<dbReference type="MEROPS" id="S01.497"/>
<dbReference type="GO" id="GO:0005576">
    <property type="term" value="C:extracellular region"/>
    <property type="evidence" value="ECO:0007669"/>
    <property type="project" value="UniProtKB-SubCell"/>
</dbReference>
<dbReference type="GO" id="GO:0030141">
    <property type="term" value="C:secretory granule"/>
    <property type="evidence" value="ECO:0007669"/>
    <property type="project" value="TreeGrafter"/>
</dbReference>
<dbReference type="GO" id="GO:0004252">
    <property type="term" value="F:serine-type endopeptidase activity"/>
    <property type="evidence" value="ECO:0007669"/>
    <property type="project" value="InterPro"/>
</dbReference>
<dbReference type="GO" id="GO:0090729">
    <property type="term" value="F:toxin activity"/>
    <property type="evidence" value="ECO:0007669"/>
    <property type="project" value="UniProtKB-KW"/>
</dbReference>
<dbReference type="GO" id="GO:0006508">
    <property type="term" value="P:proteolysis"/>
    <property type="evidence" value="ECO:0007669"/>
    <property type="project" value="UniProtKB-KW"/>
</dbReference>
<dbReference type="CDD" id="cd00190">
    <property type="entry name" value="Tryp_SPc"/>
    <property type="match status" value="1"/>
</dbReference>
<dbReference type="FunFam" id="2.40.10.10:FF:000010">
    <property type="entry name" value="Kallikrein related peptidase 11"/>
    <property type="match status" value="1"/>
</dbReference>
<dbReference type="Gene3D" id="2.40.10.10">
    <property type="entry name" value="Trypsin-like serine proteases"/>
    <property type="match status" value="2"/>
</dbReference>
<dbReference type="InterPro" id="IPR009003">
    <property type="entry name" value="Peptidase_S1_PA"/>
</dbReference>
<dbReference type="InterPro" id="IPR043504">
    <property type="entry name" value="Peptidase_S1_PA_chymotrypsin"/>
</dbReference>
<dbReference type="InterPro" id="IPR001314">
    <property type="entry name" value="Peptidase_S1A"/>
</dbReference>
<dbReference type="InterPro" id="IPR001254">
    <property type="entry name" value="Trypsin_dom"/>
</dbReference>
<dbReference type="InterPro" id="IPR018114">
    <property type="entry name" value="TRYPSIN_HIS"/>
</dbReference>
<dbReference type="PANTHER" id="PTHR24271:SF47">
    <property type="entry name" value="KALLIKREIN-1"/>
    <property type="match status" value="1"/>
</dbReference>
<dbReference type="PANTHER" id="PTHR24271">
    <property type="entry name" value="KALLIKREIN-RELATED"/>
    <property type="match status" value="1"/>
</dbReference>
<dbReference type="Pfam" id="PF00089">
    <property type="entry name" value="Trypsin"/>
    <property type="match status" value="1"/>
</dbReference>
<dbReference type="PRINTS" id="PR00722">
    <property type="entry name" value="CHYMOTRYPSIN"/>
</dbReference>
<dbReference type="SMART" id="SM00020">
    <property type="entry name" value="Tryp_SPc"/>
    <property type="match status" value="1"/>
</dbReference>
<dbReference type="SUPFAM" id="SSF50494">
    <property type="entry name" value="Trypsin-like serine proteases"/>
    <property type="match status" value="1"/>
</dbReference>
<dbReference type="PROSITE" id="PS50240">
    <property type="entry name" value="TRYPSIN_DOM"/>
    <property type="match status" value="1"/>
</dbReference>
<dbReference type="PROSITE" id="PS00134">
    <property type="entry name" value="TRYPSIN_HIS"/>
    <property type="match status" value="1"/>
</dbReference>
<reference key="1">
    <citation type="submission" date="2001-06" db="EMBL/GenBank/DDBJ databases">
        <title>Identification of geographic variations and cloning of venom proteins of Trimeresurus stejnegeri: serine proteases and phospholipases.</title>
        <authorList>
            <person name="Tsai I.-H."/>
            <person name="Wang Y.-M."/>
        </authorList>
    </citation>
    <scope>NUCLEOTIDE SEQUENCE [MRNA]</scope>
    <source>
        <tissue>Venom gland</tissue>
    </source>
</reference>
<accession>Q71QI8</accession>
<sequence length="257" mass="28141">MVLIRVLANLLILQLSYAQKSSELVVGGDECNINEHRFLVLVYTDGIQCGGTLINKEWMLTAAHCDGKKMKLQFGLHSKNVPNKDKQTRVPKKKYFFPCSKNFTKWDKDIMLIRLNHPVNNSTHIAPLSLPSKPPSQDTVCNIMGWGTISPTKEIYPDVPHCANINIVDHAVCRAFYPGLLEKSKTLCAGILEGGKDTCQGVSGGPLICNGQIQGIVSVGGDPCAEPRVPALYTKVFDHLDWIKSIIAGNTAATCPL</sequence>
<proteinExistence type="evidence at transcript level"/>
<name>VSP10_TRIST</name>
<comment type="function">
    <text evidence="1">Snake venom serine protease that may act in the hemostasis system of the prey.</text>
</comment>
<comment type="subunit">
    <text evidence="1">Monomer.</text>
</comment>
<comment type="subcellular location">
    <subcellularLocation>
        <location evidence="1">Secreted</location>
    </subcellularLocation>
</comment>
<comment type="tissue specificity">
    <text>Expressed by the venom gland.</text>
</comment>
<comment type="similarity">
    <text evidence="3">Belongs to the peptidase S1 family. Snake venom subfamily.</text>
</comment>
<organism>
    <name type="scientific">Trimeresurus stejnegeri</name>
    <name type="common">Chinese green tree viper</name>
    <name type="synonym">Viridovipera stejnegeri</name>
    <dbReference type="NCBI Taxonomy" id="39682"/>
    <lineage>
        <taxon>Eukaryota</taxon>
        <taxon>Metazoa</taxon>
        <taxon>Chordata</taxon>
        <taxon>Craniata</taxon>
        <taxon>Vertebrata</taxon>
        <taxon>Euteleostomi</taxon>
        <taxon>Lepidosauria</taxon>
        <taxon>Squamata</taxon>
        <taxon>Bifurcata</taxon>
        <taxon>Unidentata</taxon>
        <taxon>Episquamata</taxon>
        <taxon>Toxicofera</taxon>
        <taxon>Serpentes</taxon>
        <taxon>Colubroidea</taxon>
        <taxon>Viperidae</taxon>
        <taxon>Crotalinae</taxon>
        <taxon>Trimeresurus</taxon>
    </lineage>
</organism>
<evidence type="ECO:0000250" key="1"/>
<evidence type="ECO:0000255" key="2"/>
<evidence type="ECO:0000255" key="3">
    <source>
        <dbReference type="PROSITE-ProRule" id="PRU00274"/>
    </source>
</evidence>